<dbReference type="EMBL" id="CP000647">
    <property type="protein sequence ID" value="ABR77662.1"/>
    <property type="molecule type" value="Genomic_DNA"/>
</dbReference>
<dbReference type="RefSeq" id="WP_004145431.1">
    <property type="nucleotide sequence ID" value="NC_009648.1"/>
</dbReference>
<dbReference type="SMR" id="A6TAP1"/>
<dbReference type="STRING" id="272620.KPN_02236"/>
<dbReference type="PaxDb" id="272620-KPN_02236"/>
<dbReference type="EnsemblBacteria" id="ABR77662">
    <property type="protein sequence ID" value="ABR77662"/>
    <property type="gene ID" value="KPN_02236"/>
</dbReference>
<dbReference type="KEGG" id="kpn:KPN_02236"/>
<dbReference type="HOGENOM" id="CLU_092816_1_1_6"/>
<dbReference type="Proteomes" id="UP000000265">
    <property type="component" value="Chromosome"/>
</dbReference>
<dbReference type="GO" id="GO:0009279">
    <property type="term" value="C:cell outer membrane"/>
    <property type="evidence" value="ECO:0007669"/>
    <property type="project" value="UniProtKB-SubCell"/>
</dbReference>
<dbReference type="GO" id="GO:0044874">
    <property type="term" value="P:lipoprotein localization to outer membrane"/>
    <property type="evidence" value="ECO:0007669"/>
    <property type="project" value="UniProtKB-UniRule"/>
</dbReference>
<dbReference type="GO" id="GO:0015031">
    <property type="term" value="P:protein transport"/>
    <property type="evidence" value="ECO:0007669"/>
    <property type="project" value="UniProtKB-KW"/>
</dbReference>
<dbReference type="CDD" id="cd16326">
    <property type="entry name" value="LolB"/>
    <property type="match status" value="1"/>
</dbReference>
<dbReference type="Gene3D" id="2.50.20.10">
    <property type="entry name" value="Lipoprotein localisation LolA/LolB/LppX"/>
    <property type="match status" value="1"/>
</dbReference>
<dbReference type="HAMAP" id="MF_00233">
    <property type="entry name" value="LolB"/>
    <property type="match status" value="1"/>
</dbReference>
<dbReference type="InterPro" id="IPR029046">
    <property type="entry name" value="LolA/LolB/LppX"/>
</dbReference>
<dbReference type="InterPro" id="IPR004565">
    <property type="entry name" value="OM_lipoprot_LolB"/>
</dbReference>
<dbReference type="NCBIfam" id="TIGR00548">
    <property type="entry name" value="lolB"/>
    <property type="match status" value="1"/>
</dbReference>
<dbReference type="Pfam" id="PF03550">
    <property type="entry name" value="LolB"/>
    <property type="match status" value="1"/>
</dbReference>
<dbReference type="SUPFAM" id="SSF89392">
    <property type="entry name" value="Prokaryotic lipoproteins and lipoprotein localization factors"/>
    <property type="match status" value="1"/>
</dbReference>
<dbReference type="PROSITE" id="PS51257">
    <property type="entry name" value="PROKAR_LIPOPROTEIN"/>
    <property type="match status" value="1"/>
</dbReference>
<evidence type="ECO:0000255" key="1">
    <source>
        <dbReference type="HAMAP-Rule" id="MF_00233"/>
    </source>
</evidence>
<proteinExistence type="inferred from homology"/>
<accession>A6TAP1</accession>
<gene>
    <name evidence="1" type="primary">lolB</name>
    <name type="ordered locus">KPN78578_22010</name>
    <name type="ORF">KPN_02236</name>
</gene>
<name>LOLB_KLEP7</name>
<feature type="signal peptide" evidence="1">
    <location>
        <begin position="1"/>
        <end position="17"/>
    </location>
</feature>
<feature type="chain" id="PRO_0000336609" description="Outer-membrane lipoprotein LolB">
    <location>
        <begin position="18"/>
        <end position="203"/>
    </location>
</feature>
<feature type="lipid moiety-binding region" description="N-palmitoyl cysteine" evidence="1">
    <location>
        <position position="18"/>
    </location>
</feature>
<feature type="lipid moiety-binding region" description="S-diacylglycerol cysteine" evidence="1">
    <location>
        <position position="18"/>
    </location>
</feature>
<organism>
    <name type="scientific">Klebsiella pneumoniae subsp. pneumoniae (strain ATCC 700721 / MGH 78578)</name>
    <dbReference type="NCBI Taxonomy" id="272620"/>
    <lineage>
        <taxon>Bacteria</taxon>
        <taxon>Pseudomonadati</taxon>
        <taxon>Pseudomonadota</taxon>
        <taxon>Gammaproteobacteria</taxon>
        <taxon>Enterobacterales</taxon>
        <taxon>Enterobacteriaceae</taxon>
        <taxon>Klebsiella/Raoultella group</taxon>
        <taxon>Klebsiella</taxon>
        <taxon>Klebsiella pneumoniae complex</taxon>
    </lineage>
</organism>
<reference key="1">
    <citation type="submission" date="2006-09" db="EMBL/GenBank/DDBJ databases">
        <authorList>
            <consortium name="The Klebsiella pneumonia Genome Sequencing Project"/>
            <person name="McClelland M."/>
            <person name="Sanderson E.K."/>
            <person name="Spieth J."/>
            <person name="Clifton W.S."/>
            <person name="Latreille P."/>
            <person name="Sabo A."/>
            <person name="Pepin K."/>
            <person name="Bhonagiri V."/>
            <person name="Porwollik S."/>
            <person name="Ali J."/>
            <person name="Wilson R.K."/>
        </authorList>
    </citation>
    <scope>NUCLEOTIDE SEQUENCE [LARGE SCALE GENOMIC DNA]</scope>
    <source>
        <strain>ATCC 700721 / MGH 78578</strain>
    </source>
</reference>
<comment type="function">
    <text evidence="1">Plays a critical role in the incorporation of lipoproteins in the outer membrane after they are released by the LolA protein.</text>
</comment>
<comment type="subunit">
    <text evidence="1">Monomer.</text>
</comment>
<comment type="subcellular location">
    <subcellularLocation>
        <location evidence="1">Cell outer membrane</location>
        <topology evidence="1">Lipid-anchor</topology>
    </subcellularLocation>
</comment>
<comment type="similarity">
    <text evidence="1">Belongs to the LolB family.</text>
</comment>
<keyword id="KW-0998">Cell outer membrane</keyword>
<keyword id="KW-0143">Chaperone</keyword>
<keyword id="KW-0449">Lipoprotein</keyword>
<keyword id="KW-0472">Membrane</keyword>
<keyword id="KW-0564">Palmitate</keyword>
<keyword id="KW-0653">Protein transport</keyword>
<keyword id="KW-0732">Signal</keyword>
<keyword id="KW-0813">Transport</keyword>
<sequence length="203" mass="23002">MNRLFRLLPLASLVLTACSLHTPQGPGKSPDSPQWRQHQQAVRSLNQFQTRGAFAYLSDEQKVYARFFWQQTGQDRYRLLLTNPLGSTELSLTAQPGSVQLIDNKGQTYTAADAEEMIGRLTGMPIPLNSLRQWIIGLPGDATDYSLDDRYRLRELNYTQNGKTWHVTYGGYTSDTQPALPSNVELNNGAQRIKLKMDNWIVK</sequence>
<protein>
    <recommendedName>
        <fullName evidence="1">Outer-membrane lipoprotein LolB</fullName>
    </recommendedName>
</protein>